<feature type="chain" id="PRO_0000270880" description="Type III pantothenate kinase">
    <location>
        <begin position="1"/>
        <end position="255"/>
    </location>
</feature>
<feature type="active site" description="Proton acceptor" evidence="1">
    <location>
        <position position="111"/>
    </location>
</feature>
<feature type="binding site" evidence="1">
    <location>
        <begin position="12"/>
        <end position="19"/>
    </location>
    <ligand>
        <name>ATP</name>
        <dbReference type="ChEBI" id="CHEBI:30616"/>
    </ligand>
</feature>
<feature type="binding site" evidence="1">
    <location>
        <begin position="109"/>
        <end position="112"/>
    </location>
    <ligand>
        <name>substrate</name>
    </ligand>
</feature>
<feature type="binding site" evidence="1">
    <location>
        <position position="133"/>
    </location>
    <ligand>
        <name>ATP</name>
        <dbReference type="ChEBI" id="CHEBI:30616"/>
    </ligand>
</feature>
<feature type="binding site" evidence="1">
    <location>
        <position position="185"/>
    </location>
    <ligand>
        <name>substrate</name>
    </ligand>
</feature>
<name>COAX_MALP2</name>
<evidence type="ECO:0000255" key="1">
    <source>
        <dbReference type="HAMAP-Rule" id="MF_01274"/>
    </source>
</evidence>
<proteinExistence type="inferred from homology"/>
<gene>
    <name evidence="1" type="primary">coaX</name>
    <name type="ordered locus">MYPE10210</name>
</gene>
<keyword id="KW-0067">ATP-binding</keyword>
<keyword id="KW-0173">Coenzyme A biosynthesis</keyword>
<keyword id="KW-0963">Cytoplasm</keyword>
<keyword id="KW-0418">Kinase</keyword>
<keyword id="KW-0547">Nucleotide-binding</keyword>
<keyword id="KW-0630">Potassium</keyword>
<keyword id="KW-1185">Reference proteome</keyword>
<keyword id="KW-0808">Transferase</keyword>
<reference key="1">
    <citation type="journal article" date="2002" name="Nucleic Acids Res.">
        <title>The complete genomic sequence of Mycoplasma penetrans, an intracellular bacterial pathogen in humans.</title>
        <authorList>
            <person name="Sasaki Y."/>
            <person name="Ishikawa J."/>
            <person name="Yamashita A."/>
            <person name="Oshima K."/>
            <person name="Kenri T."/>
            <person name="Furuya K."/>
            <person name="Yoshino C."/>
            <person name="Horino A."/>
            <person name="Shiba T."/>
            <person name="Sasaki T."/>
            <person name="Hattori M."/>
        </authorList>
    </citation>
    <scope>NUCLEOTIDE SEQUENCE [LARGE SCALE GENOMIC DNA]</scope>
    <source>
        <strain>HF-2</strain>
    </source>
</reference>
<dbReference type="EC" id="2.7.1.33" evidence="1"/>
<dbReference type="EMBL" id="BA000026">
    <property type="protein sequence ID" value="BAC44806.1"/>
    <property type="molecule type" value="Genomic_DNA"/>
</dbReference>
<dbReference type="RefSeq" id="WP_011077834.1">
    <property type="nucleotide sequence ID" value="NC_004432.1"/>
</dbReference>
<dbReference type="SMR" id="Q8EUB0"/>
<dbReference type="FunCoup" id="Q8EUB0">
    <property type="interactions" value="162"/>
</dbReference>
<dbReference type="STRING" id="272633.gene:10732140"/>
<dbReference type="KEGG" id="mpe:MYPE10210"/>
<dbReference type="eggNOG" id="COG1521">
    <property type="taxonomic scope" value="Bacteria"/>
</dbReference>
<dbReference type="HOGENOM" id="CLU_1089146_0_0_14"/>
<dbReference type="InParanoid" id="Q8EUB0"/>
<dbReference type="UniPathway" id="UPA00241">
    <property type="reaction ID" value="UER00352"/>
</dbReference>
<dbReference type="Proteomes" id="UP000002522">
    <property type="component" value="Chromosome"/>
</dbReference>
<dbReference type="GO" id="GO:0005737">
    <property type="term" value="C:cytoplasm"/>
    <property type="evidence" value="ECO:0007669"/>
    <property type="project" value="UniProtKB-SubCell"/>
</dbReference>
<dbReference type="GO" id="GO:0005524">
    <property type="term" value="F:ATP binding"/>
    <property type="evidence" value="ECO:0007669"/>
    <property type="project" value="UniProtKB-UniRule"/>
</dbReference>
<dbReference type="GO" id="GO:0004594">
    <property type="term" value="F:pantothenate kinase activity"/>
    <property type="evidence" value="ECO:0007669"/>
    <property type="project" value="UniProtKB-UniRule"/>
</dbReference>
<dbReference type="GO" id="GO:0015937">
    <property type="term" value="P:coenzyme A biosynthetic process"/>
    <property type="evidence" value="ECO:0007669"/>
    <property type="project" value="UniProtKB-UniRule"/>
</dbReference>
<dbReference type="CDD" id="cd24015">
    <property type="entry name" value="ASKHA_NBD_PanK-III"/>
    <property type="match status" value="1"/>
</dbReference>
<dbReference type="Gene3D" id="3.30.420.40">
    <property type="match status" value="2"/>
</dbReference>
<dbReference type="HAMAP" id="MF_01274">
    <property type="entry name" value="Pantothen_kinase_3"/>
    <property type="match status" value="1"/>
</dbReference>
<dbReference type="InterPro" id="IPR043129">
    <property type="entry name" value="ATPase_NBD"/>
</dbReference>
<dbReference type="InterPro" id="IPR004619">
    <property type="entry name" value="Type_III_PanK"/>
</dbReference>
<dbReference type="NCBIfam" id="TIGR00671">
    <property type="entry name" value="baf"/>
    <property type="match status" value="1"/>
</dbReference>
<dbReference type="PANTHER" id="PTHR34265">
    <property type="entry name" value="TYPE III PANTOTHENATE KINASE"/>
    <property type="match status" value="1"/>
</dbReference>
<dbReference type="PANTHER" id="PTHR34265:SF1">
    <property type="entry name" value="TYPE III PANTOTHENATE KINASE"/>
    <property type="match status" value="1"/>
</dbReference>
<dbReference type="Pfam" id="PF03309">
    <property type="entry name" value="Pan_kinase"/>
    <property type="match status" value="1"/>
</dbReference>
<dbReference type="SUPFAM" id="SSF53067">
    <property type="entry name" value="Actin-like ATPase domain"/>
    <property type="match status" value="2"/>
</dbReference>
<accession>Q8EUB0</accession>
<organism>
    <name type="scientific">Malacoplasma penetrans (strain HF-2)</name>
    <name type="common">Mycoplasma penetrans</name>
    <dbReference type="NCBI Taxonomy" id="272633"/>
    <lineage>
        <taxon>Bacteria</taxon>
        <taxon>Bacillati</taxon>
        <taxon>Mycoplasmatota</taxon>
        <taxon>Mycoplasmoidales</taxon>
        <taxon>Mycoplasmoidaceae</taxon>
        <taxon>Malacoplasma</taxon>
    </lineage>
</organism>
<sequence length="255" mass="28548">MKNNQEYILVVDIGNSYTKIGIFEKEKENTTSIILFPTDSETNIATLSKKMNVFKKYNIKHSIVGSVVPKLKPTYFKTIKKMFNIEPYYISETTKYSFLIDESPNKELGDDLKALCEYCVSVNKNCIGISFGTAIASVYLKNNSLVGASIAAGLGFGLNKLIEKASLLKKSKIDKFSSDFFGTNTISALESGINNLRSGFAYNFYNQAKKDNLNSDLKCIITGGESYNINISSFEYEINKEAILLGFKKIYFLNN</sequence>
<comment type="function">
    <text evidence="1">Catalyzes the phosphorylation of pantothenate (Pan), the first step in CoA biosynthesis.</text>
</comment>
<comment type="catalytic activity">
    <reaction evidence="1">
        <text>(R)-pantothenate + ATP = (R)-4'-phosphopantothenate + ADP + H(+)</text>
        <dbReference type="Rhea" id="RHEA:16373"/>
        <dbReference type="ChEBI" id="CHEBI:10986"/>
        <dbReference type="ChEBI" id="CHEBI:15378"/>
        <dbReference type="ChEBI" id="CHEBI:29032"/>
        <dbReference type="ChEBI" id="CHEBI:30616"/>
        <dbReference type="ChEBI" id="CHEBI:456216"/>
        <dbReference type="EC" id="2.7.1.33"/>
    </reaction>
</comment>
<comment type="cofactor">
    <cofactor evidence="1">
        <name>NH4(+)</name>
        <dbReference type="ChEBI" id="CHEBI:28938"/>
    </cofactor>
    <cofactor evidence="1">
        <name>K(+)</name>
        <dbReference type="ChEBI" id="CHEBI:29103"/>
    </cofactor>
    <text evidence="1">A monovalent cation. Ammonium or potassium.</text>
</comment>
<comment type="pathway">
    <text evidence="1">Cofactor biosynthesis; coenzyme A biosynthesis; CoA from (R)-pantothenate: step 1/5.</text>
</comment>
<comment type="subunit">
    <text evidence="1">Homodimer.</text>
</comment>
<comment type="subcellular location">
    <subcellularLocation>
        <location evidence="1">Cytoplasm</location>
    </subcellularLocation>
</comment>
<comment type="similarity">
    <text evidence="1">Belongs to the type III pantothenate kinase family.</text>
</comment>
<protein>
    <recommendedName>
        <fullName evidence="1">Type III pantothenate kinase</fullName>
        <ecNumber evidence="1">2.7.1.33</ecNumber>
    </recommendedName>
    <alternativeName>
        <fullName evidence="1">PanK-III</fullName>
    </alternativeName>
    <alternativeName>
        <fullName evidence="1">Pantothenic acid kinase</fullName>
    </alternativeName>
</protein>